<reference key="1">
    <citation type="journal article" date="1988" name="Eur. J. Biochem.">
        <title>Cloning and expression in Escherichia coli of two additional amylase genes of a strictly anaerobic thermophile, Dictyoglomus thermophilum, and their nucleotide sequences with extremely low guanine-plus-cytosine contents.</title>
        <authorList>
            <person name="Horinouchi S."/>
            <person name="Fukusumi S."/>
            <person name="Ohshima T."/>
            <person name="Beppu T."/>
        </authorList>
    </citation>
    <scope>NUCLEOTIDE SEQUENCE [GENOMIC DNA]</scope>
    <scope>PROTEIN SEQUENCE OF 1-8</scope>
</reference>
<reference key="2">
    <citation type="journal article" date="2014" name="Genome Announc.">
        <title>Complete Genome Sequence of the Extreme Thermophile Dictyoglomus thermophilum H-6-12.</title>
        <authorList>
            <person name="Coil D.A."/>
            <person name="Badger J.H."/>
            <person name="Forberger H.C."/>
            <person name="Riggs F."/>
            <person name="Madupu R."/>
            <person name="Fedorova N."/>
            <person name="Ward N."/>
            <person name="Robb F.T."/>
            <person name="Eisen J.A."/>
        </authorList>
    </citation>
    <scope>NUCLEOTIDE SEQUENCE [LARGE SCALE GENOMIC DNA]</scope>
    <source>
        <strain>ATCC 35947 / DSM 3960 / H-6-12</strain>
    </source>
</reference>
<evidence type="ECO:0000250" key="1"/>
<evidence type="ECO:0000255" key="2"/>
<evidence type="ECO:0000305" key="3"/>
<name>AMY2_DICT6</name>
<comment type="catalytic activity">
    <reaction>
        <text>Endohydrolysis of (1-&gt;4)-alpha-D-glucosidic linkages in polysaccharides containing three or more (1-&gt;4)-alpha-linked D-glucose units.</text>
        <dbReference type="EC" id="3.2.1.1"/>
    </reaction>
</comment>
<comment type="cofactor">
    <cofactor evidence="3">
        <name>Ca(2+)</name>
        <dbReference type="ChEBI" id="CHEBI:29108"/>
    </cofactor>
    <text evidence="3">Binds 1 Ca(2+) ion per subunit.</text>
</comment>
<comment type="subunit">
    <text evidence="1">Monomer.</text>
</comment>
<comment type="subcellular location">
    <subcellularLocation>
        <location>Cytoplasm</location>
    </subcellularLocation>
</comment>
<comment type="miscellaneous">
    <text>When compared to AmyA, AmyB produced larger amounts of reducing sugar.</text>
</comment>
<comment type="similarity">
    <text evidence="3">Belongs to the glycosyl hydrolase 13 family.</text>
</comment>
<protein>
    <recommendedName>
        <fullName>Alpha-amylase 2</fullName>
        <ecNumber>3.2.1.1</ecNumber>
    </recommendedName>
    <alternativeName>
        <fullName>1,4-alpha-D-glucan glucanohydrolase</fullName>
    </alternativeName>
</protein>
<gene>
    <name type="primary">amyB</name>
    <name type="ordered locus">DICTH_0636.1</name>
</gene>
<proteinExistence type="evidence at protein level"/>
<keyword id="KW-0106">Calcium</keyword>
<keyword id="KW-0119">Carbohydrate metabolism</keyword>
<keyword id="KW-0963">Cytoplasm</keyword>
<keyword id="KW-0903">Direct protein sequencing</keyword>
<keyword id="KW-0326">Glycosidase</keyword>
<keyword id="KW-0378">Hydrolase</keyword>
<keyword id="KW-0479">Metal-binding</keyword>
<organism>
    <name type="scientific">Dictyoglomus thermophilum (strain ATCC 35947 / DSM 3960 / H-6-12)</name>
    <dbReference type="NCBI Taxonomy" id="309799"/>
    <lineage>
        <taxon>Bacteria</taxon>
        <taxon>Pseudomonadati</taxon>
        <taxon>Dictyoglomota</taxon>
        <taxon>Dictyoglomia</taxon>
        <taxon>Dictyoglomales</taxon>
        <taxon>Dictyoglomaceae</taxon>
        <taxon>Dictyoglomus</taxon>
    </lineage>
</organism>
<accession>P14898</accession>
<sequence length="562" mass="67027">MIYDDKIFGDLCHKEFLVEREVKKLEEIYLEEVLPEDPKPEDEIEFTFNCPLKFHITSGKIVKDNREIYTFNIQERKTQWNDSIFNFSEIIKIKIPPLKENGLYQIHLYEMNEKIYEQYLSIDNFEAPLWSEESIIYHIFIDRFAKDEKEVEYSENLKEKLGGNLKGILSRLDYIENLGINTIWISPIFKSTSYHGYDIEDYFEIDPIWGTKEDLKKLVREAFNRGIRIILDFVPNHMSYKNPIFQKALKDKNSNLRSWFIFKGEDYETFFGVKSMPKINLKNKEAIDYIINAAKYWIREFGISGYRMDHATGPDINFWSIFYYNLKSEFPETFYFGEIVETPKETKKYVGKFDGTLDFYLFKIIRDFFIGKRWSTKEFVKMIDLEEKFYGNKFKRISFLENHDSNRFLWVAKDKKLLRLASIFQFSINAIPIIYNGQEMGCSQYRDILEGNRTLHEHARLPIPWSDDKQDKELIDFYRQLVKIRKSHPALYKGTFIPIFSDMISFIKETQEESILVLINIEDKEEIFNLNGTYRDLFSGNIYTNSLKLGPMSAHLLLRIDH</sequence>
<feature type="chain" id="PRO_0000054285" description="Alpha-amylase 2">
    <location>
        <begin position="1"/>
        <end position="562"/>
    </location>
</feature>
<feature type="active site" description="Nucleophile" evidence="1">
    <location>
        <position position="309"/>
    </location>
</feature>
<feature type="active site" description="Proton donor" evidence="1">
    <location>
        <position position="338"/>
    </location>
</feature>
<feature type="binding site" evidence="2">
    <location>
        <position position="236"/>
    </location>
    <ligand>
        <name>Ca(2+)</name>
        <dbReference type="ChEBI" id="CHEBI:29108"/>
    </ligand>
</feature>
<feature type="site" description="Transition state stabilizer" evidence="1">
    <location>
        <position position="404"/>
    </location>
</feature>
<feature type="sequence conflict" description="In Ref. 1; CAA31586." evidence="3" ref="1">
    <original>N</original>
    <variation>S</variation>
    <location>
        <position position="124"/>
    </location>
</feature>
<dbReference type="EC" id="3.2.1.1"/>
<dbReference type="EMBL" id="X13199">
    <property type="protein sequence ID" value="CAA31586.1"/>
    <property type="molecule type" value="Genomic_DNA"/>
</dbReference>
<dbReference type="EMBL" id="CP001146">
    <property type="status" value="NOT_ANNOTATED_CDS"/>
    <property type="molecule type" value="Genomic_DNA"/>
</dbReference>
<dbReference type="PIR" id="S01312">
    <property type="entry name" value="S01312"/>
</dbReference>
<dbReference type="RefSeq" id="WP_049751865.1">
    <property type="nucleotide sequence ID" value="NC_011297.1"/>
</dbReference>
<dbReference type="SMR" id="P14898"/>
<dbReference type="CAZy" id="GH13">
    <property type="family name" value="Glycoside Hydrolase Family 13"/>
</dbReference>
<dbReference type="OrthoDB" id="9805159at2"/>
<dbReference type="Proteomes" id="UP000001733">
    <property type="component" value="Chromosome"/>
</dbReference>
<dbReference type="GO" id="GO:0005737">
    <property type="term" value="C:cytoplasm"/>
    <property type="evidence" value="ECO:0007669"/>
    <property type="project" value="UniProtKB-SubCell"/>
</dbReference>
<dbReference type="GO" id="GO:0004556">
    <property type="term" value="F:alpha-amylase activity"/>
    <property type="evidence" value="ECO:0007669"/>
    <property type="project" value="UniProtKB-EC"/>
</dbReference>
<dbReference type="GO" id="GO:0046872">
    <property type="term" value="F:metal ion binding"/>
    <property type="evidence" value="ECO:0007669"/>
    <property type="project" value="UniProtKB-KW"/>
</dbReference>
<dbReference type="GO" id="GO:0005975">
    <property type="term" value="P:carbohydrate metabolic process"/>
    <property type="evidence" value="ECO:0007669"/>
    <property type="project" value="InterPro"/>
</dbReference>
<dbReference type="FunFam" id="3.20.20.80:FF:000314">
    <property type="entry name" value="Alpha amylase catalytic region"/>
    <property type="match status" value="1"/>
</dbReference>
<dbReference type="Gene3D" id="3.20.20.80">
    <property type="entry name" value="Glycosidases"/>
    <property type="match status" value="1"/>
</dbReference>
<dbReference type="InterPro" id="IPR006047">
    <property type="entry name" value="Glyco_hydro_13_cat_dom"/>
</dbReference>
<dbReference type="InterPro" id="IPR017853">
    <property type="entry name" value="Glycoside_hydrolase_SF"/>
</dbReference>
<dbReference type="PANTHER" id="PTHR10357:SF199">
    <property type="entry name" value="ALPHA AMYLASE CATALYTIC REGION"/>
    <property type="match status" value="1"/>
</dbReference>
<dbReference type="PANTHER" id="PTHR10357">
    <property type="entry name" value="ALPHA-AMYLASE FAMILY MEMBER"/>
    <property type="match status" value="1"/>
</dbReference>
<dbReference type="Pfam" id="PF00128">
    <property type="entry name" value="Alpha-amylase"/>
    <property type="match status" value="1"/>
</dbReference>
<dbReference type="SMART" id="SM00642">
    <property type="entry name" value="Aamy"/>
    <property type="match status" value="1"/>
</dbReference>
<dbReference type="SUPFAM" id="SSF51445">
    <property type="entry name" value="(Trans)glycosidases"/>
    <property type="match status" value="1"/>
</dbReference>